<comment type="function">
    <text evidence="1">Catalyzes the transfer of a phosphate group to glutamate to form L-glutamate 5-phosphate.</text>
</comment>
<comment type="catalytic activity">
    <reaction evidence="1">
        <text>L-glutamate + ATP = L-glutamyl 5-phosphate + ADP</text>
        <dbReference type="Rhea" id="RHEA:14877"/>
        <dbReference type="ChEBI" id="CHEBI:29985"/>
        <dbReference type="ChEBI" id="CHEBI:30616"/>
        <dbReference type="ChEBI" id="CHEBI:58274"/>
        <dbReference type="ChEBI" id="CHEBI:456216"/>
        <dbReference type="EC" id="2.7.2.11"/>
    </reaction>
</comment>
<comment type="pathway">
    <text evidence="1">Amino-acid biosynthesis; L-proline biosynthesis; L-glutamate 5-semialdehyde from L-glutamate: step 1/2.</text>
</comment>
<comment type="subcellular location">
    <subcellularLocation>
        <location evidence="1">Cytoplasm</location>
    </subcellularLocation>
</comment>
<comment type="similarity">
    <text evidence="1">Belongs to the glutamate 5-kinase family.</text>
</comment>
<accession>Q5NR24</accession>
<dbReference type="EC" id="2.7.2.11" evidence="1"/>
<dbReference type="EMBL" id="AE008692">
    <property type="protein sequence ID" value="AAV88830.1"/>
    <property type="molecule type" value="Genomic_DNA"/>
</dbReference>
<dbReference type="SMR" id="Q5NR24"/>
<dbReference type="STRING" id="264203.ZMO0206"/>
<dbReference type="KEGG" id="zmo:ZMO0206"/>
<dbReference type="eggNOG" id="COG0263">
    <property type="taxonomic scope" value="Bacteria"/>
</dbReference>
<dbReference type="HOGENOM" id="CLU_025400_2_0_5"/>
<dbReference type="UniPathway" id="UPA00098">
    <property type="reaction ID" value="UER00359"/>
</dbReference>
<dbReference type="Proteomes" id="UP000001173">
    <property type="component" value="Chromosome"/>
</dbReference>
<dbReference type="GO" id="GO:0005829">
    <property type="term" value="C:cytosol"/>
    <property type="evidence" value="ECO:0007669"/>
    <property type="project" value="TreeGrafter"/>
</dbReference>
<dbReference type="GO" id="GO:0005524">
    <property type="term" value="F:ATP binding"/>
    <property type="evidence" value="ECO:0007669"/>
    <property type="project" value="UniProtKB-KW"/>
</dbReference>
<dbReference type="GO" id="GO:0004349">
    <property type="term" value="F:glutamate 5-kinase activity"/>
    <property type="evidence" value="ECO:0007669"/>
    <property type="project" value="UniProtKB-UniRule"/>
</dbReference>
<dbReference type="GO" id="GO:0003723">
    <property type="term" value="F:RNA binding"/>
    <property type="evidence" value="ECO:0007669"/>
    <property type="project" value="InterPro"/>
</dbReference>
<dbReference type="GO" id="GO:0055129">
    <property type="term" value="P:L-proline biosynthetic process"/>
    <property type="evidence" value="ECO:0007669"/>
    <property type="project" value="UniProtKB-UniRule"/>
</dbReference>
<dbReference type="CDD" id="cd04242">
    <property type="entry name" value="AAK_G5K_ProB"/>
    <property type="match status" value="1"/>
</dbReference>
<dbReference type="CDD" id="cd21157">
    <property type="entry name" value="PUA_G5K"/>
    <property type="match status" value="1"/>
</dbReference>
<dbReference type="FunFam" id="2.30.130.10:FF:000007">
    <property type="entry name" value="Glutamate 5-kinase"/>
    <property type="match status" value="1"/>
</dbReference>
<dbReference type="FunFam" id="3.40.1160.10:FF:000018">
    <property type="entry name" value="Glutamate 5-kinase"/>
    <property type="match status" value="1"/>
</dbReference>
<dbReference type="Gene3D" id="3.40.1160.10">
    <property type="entry name" value="Acetylglutamate kinase-like"/>
    <property type="match status" value="1"/>
</dbReference>
<dbReference type="Gene3D" id="2.30.130.10">
    <property type="entry name" value="PUA domain"/>
    <property type="match status" value="1"/>
</dbReference>
<dbReference type="HAMAP" id="MF_00456">
    <property type="entry name" value="ProB"/>
    <property type="match status" value="1"/>
</dbReference>
<dbReference type="InterPro" id="IPR036393">
    <property type="entry name" value="AceGlu_kinase-like_sf"/>
</dbReference>
<dbReference type="InterPro" id="IPR001048">
    <property type="entry name" value="Asp/Glu/Uridylate_kinase"/>
</dbReference>
<dbReference type="InterPro" id="IPR041739">
    <property type="entry name" value="G5K_ProB"/>
</dbReference>
<dbReference type="InterPro" id="IPR001057">
    <property type="entry name" value="Glu/AcGlu_kinase"/>
</dbReference>
<dbReference type="InterPro" id="IPR011529">
    <property type="entry name" value="Glu_5kinase"/>
</dbReference>
<dbReference type="InterPro" id="IPR005715">
    <property type="entry name" value="Glu_5kinase/COase_Synthase"/>
</dbReference>
<dbReference type="InterPro" id="IPR019797">
    <property type="entry name" value="Glutamate_5-kinase_CS"/>
</dbReference>
<dbReference type="InterPro" id="IPR002478">
    <property type="entry name" value="PUA"/>
</dbReference>
<dbReference type="InterPro" id="IPR015947">
    <property type="entry name" value="PUA-like_sf"/>
</dbReference>
<dbReference type="InterPro" id="IPR036974">
    <property type="entry name" value="PUA_sf"/>
</dbReference>
<dbReference type="NCBIfam" id="TIGR01027">
    <property type="entry name" value="proB"/>
    <property type="match status" value="1"/>
</dbReference>
<dbReference type="PANTHER" id="PTHR43654">
    <property type="entry name" value="GLUTAMATE 5-KINASE"/>
    <property type="match status" value="1"/>
</dbReference>
<dbReference type="PANTHER" id="PTHR43654:SF1">
    <property type="entry name" value="ISOPENTENYL PHOSPHATE KINASE"/>
    <property type="match status" value="1"/>
</dbReference>
<dbReference type="Pfam" id="PF00696">
    <property type="entry name" value="AA_kinase"/>
    <property type="match status" value="1"/>
</dbReference>
<dbReference type="Pfam" id="PF01472">
    <property type="entry name" value="PUA"/>
    <property type="match status" value="1"/>
</dbReference>
<dbReference type="PIRSF" id="PIRSF000729">
    <property type="entry name" value="GK"/>
    <property type="match status" value="1"/>
</dbReference>
<dbReference type="PRINTS" id="PR00474">
    <property type="entry name" value="GLU5KINASE"/>
</dbReference>
<dbReference type="SMART" id="SM00359">
    <property type="entry name" value="PUA"/>
    <property type="match status" value="1"/>
</dbReference>
<dbReference type="SUPFAM" id="SSF53633">
    <property type="entry name" value="Carbamate kinase-like"/>
    <property type="match status" value="1"/>
</dbReference>
<dbReference type="SUPFAM" id="SSF88697">
    <property type="entry name" value="PUA domain-like"/>
    <property type="match status" value="1"/>
</dbReference>
<dbReference type="PROSITE" id="PS00902">
    <property type="entry name" value="GLUTAMATE_5_KINASE"/>
    <property type="match status" value="1"/>
</dbReference>
<dbReference type="PROSITE" id="PS50890">
    <property type="entry name" value="PUA"/>
    <property type="match status" value="1"/>
</dbReference>
<feature type="chain" id="PRO_0000109764" description="Glutamate 5-kinase">
    <location>
        <begin position="1"/>
        <end position="397"/>
    </location>
</feature>
<feature type="domain" description="PUA" evidence="1">
    <location>
        <begin position="306"/>
        <end position="383"/>
    </location>
</feature>
<feature type="region of interest" description="Disordered" evidence="2">
    <location>
        <begin position="1"/>
        <end position="28"/>
    </location>
</feature>
<feature type="binding site" evidence="1">
    <location>
        <position position="40"/>
    </location>
    <ligand>
        <name>ATP</name>
        <dbReference type="ChEBI" id="CHEBI:30616"/>
    </ligand>
</feature>
<feature type="binding site" evidence="1">
    <location>
        <position position="80"/>
    </location>
    <ligand>
        <name>substrate</name>
    </ligand>
</feature>
<feature type="binding site" evidence="1">
    <location>
        <position position="168"/>
    </location>
    <ligand>
        <name>substrate</name>
    </ligand>
</feature>
<feature type="binding site" evidence="1">
    <location>
        <position position="180"/>
    </location>
    <ligand>
        <name>substrate</name>
    </ligand>
</feature>
<feature type="binding site" evidence="1">
    <location>
        <begin position="200"/>
        <end position="201"/>
    </location>
    <ligand>
        <name>ATP</name>
        <dbReference type="ChEBI" id="CHEBI:30616"/>
    </ligand>
</feature>
<feature type="binding site" evidence="1">
    <location>
        <begin position="243"/>
        <end position="249"/>
    </location>
    <ligand>
        <name>ATP</name>
        <dbReference type="ChEBI" id="CHEBI:30616"/>
    </ligand>
</feature>
<proteinExistence type="inferred from homology"/>
<organism>
    <name type="scientific">Zymomonas mobilis subsp. mobilis (strain ATCC 31821 / ZM4 / CP4)</name>
    <dbReference type="NCBI Taxonomy" id="264203"/>
    <lineage>
        <taxon>Bacteria</taxon>
        <taxon>Pseudomonadati</taxon>
        <taxon>Pseudomonadota</taxon>
        <taxon>Alphaproteobacteria</taxon>
        <taxon>Sphingomonadales</taxon>
        <taxon>Zymomonadaceae</taxon>
        <taxon>Zymomonas</taxon>
    </lineage>
</organism>
<gene>
    <name evidence="1" type="primary">proB</name>
    <name type="ordered locus">ZMO0206</name>
</gene>
<name>PROB_ZYMMO</name>
<reference key="1">
    <citation type="journal article" date="2005" name="Nat. Biotechnol.">
        <title>The genome sequence of the ethanologenic bacterium Zymomonas mobilis ZM4.</title>
        <authorList>
            <person name="Seo J.-S."/>
            <person name="Chong H."/>
            <person name="Park H.S."/>
            <person name="Yoon K.-O."/>
            <person name="Jung C."/>
            <person name="Kim J.J."/>
            <person name="Hong J.H."/>
            <person name="Kim H."/>
            <person name="Kim J.-H."/>
            <person name="Kil J.-I."/>
            <person name="Park C.J."/>
            <person name="Oh H.-M."/>
            <person name="Lee J.-S."/>
            <person name="Jin S.-J."/>
            <person name="Um H.-W."/>
            <person name="Lee H.-J."/>
            <person name="Oh S.-J."/>
            <person name="Kim J.Y."/>
            <person name="Kang H.L."/>
            <person name="Lee S.Y."/>
            <person name="Lee K.J."/>
            <person name="Kang H.S."/>
        </authorList>
    </citation>
    <scope>NUCLEOTIDE SEQUENCE [LARGE SCALE GENOMIC DNA]</scope>
    <source>
        <strain>ATCC 31821 / ZM4 / CP4</strain>
    </source>
</reference>
<keyword id="KW-0028">Amino-acid biosynthesis</keyword>
<keyword id="KW-0067">ATP-binding</keyword>
<keyword id="KW-0963">Cytoplasm</keyword>
<keyword id="KW-0418">Kinase</keyword>
<keyword id="KW-0547">Nucleotide-binding</keyword>
<keyword id="KW-0641">Proline biosynthesis</keyword>
<keyword id="KW-1185">Reference proteome</keyword>
<keyword id="KW-0808">Transferase</keyword>
<evidence type="ECO:0000255" key="1">
    <source>
        <dbReference type="HAMAP-Rule" id="MF_00456"/>
    </source>
</evidence>
<evidence type="ECO:0000256" key="2">
    <source>
        <dbReference type="SAM" id="MobiDB-lite"/>
    </source>
</evidence>
<protein>
    <recommendedName>
        <fullName evidence="1">Glutamate 5-kinase</fullName>
        <ecNumber evidence="1">2.7.2.11</ecNumber>
    </recommendedName>
    <alternativeName>
        <fullName evidence="1">Gamma-glutamyl kinase</fullName>
        <shortName evidence="1">GK</shortName>
    </alternativeName>
</protein>
<sequence length="397" mass="42509">MVADLTSDISESQEQETETNSANNNGAVFRPENCPRLVIKIGSSLLVDQRGQVRRDWLQTVAYDIAKLHQAGQQIIVVSSGAIALGARRLNLPRGGRASLEDAQASASVGQILLSQCWAELLGACSLDSSQILLTLDDLEDRRRYLNVSATLDRLLSLGVVPVINENDSIATAEIRFGDNDRLAARIGQASHASGVILFSDVDGLYTANPMKDPNAKRIDRVEHIDNSTEAMASSDSASGMGSGGMASKVEAARIATYSGVNLAITTGKRPSPLTMFLDDGAGTLFTADESASAHKTWLAGRLTAHGQVYIDQGAVEALHDGNSLLPAGVCSIEGKFNRGDVVDILDQEHNLIARGLIEYDSEDSAQITGKRSQEIADILGYEARTALIHRNHMVML</sequence>